<accession>Q96FJ0</accession>
<accession>B3KPA7</accession>
<accession>Q5T9N4</accession>
<accession>Q5T9N9</accession>
<accession>Q7Z420</accession>
<accession>Q9P2H4</accession>
<feature type="chain" id="PRO_0000194874" description="AMSH-like protease">
    <location>
        <begin position="1"/>
        <end position="436"/>
    </location>
</feature>
<feature type="domain" description="MPN" evidence="2">
    <location>
        <begin position="269"/>
        <end position="397"/>
    </location>
</feature>
<feature type="short sequence motif" description="JAMM motif" evidence="2">
    <location>
        <begin position="347"/>
        <end position="360"/>
    </location>
</feature>
<feature type="binding site" evidence="2 4 12">
    <location>
        <position position="347"/>
    </location>
    <ligand>
        <name>Zn(2+)</name>
        <dbReference type="ChEBI" id="CHEBI:29105"/>
        <label>1</label>
        <note>catalytic</note>
    </ligand>
</feature>
<feature type="binding site" evidence="2 4 12">
    <location>
        <position position="349"/>
    </location>
    <ligand>
        <name>Zn(2+)</name>
        <dbReference type="ChEBI" id="CHEBI:29105"/>
        <label>1</label>
        <note>catalytic</note>
    </ligand>
</feature>
<feature type="binding site" evidence="2 4 12">
    <location>
        <position position="360"/>
    </location>
    <ligand>
        <name>Zn(2+)</name>
        <dbReference type="ChEBI" id="CHEBI:29105"/>
        <label>1</label>
        <note>catalytic</note>
    </ligand>
</feature>
<feature type="binding site" evidence="4 5 12 13">
    <location>
        <position position="362"/>
    </location>
    <ligand>
        <name>Zn(2+)</name>
        <dbReference type="ChEBI" id="CHEBI:29105"/>
        <label>2</label>
    </ligand>
</feature>
<feature type="binding site" evidence="4 5 12 13">
    <location>
        <position position="402"/>
    </location>
    <ligand>
        <name>Zn(2+)</name>
        <dbReference type="ChEBI" id="CHEBI:29105"/>
        <label>2</label>
    </ligand>
</feature>
<feature type="binding site" evidence="4 5 12 13">
    <location>
        <position position="408"/>
    </location>
    <ligand>
        <name>Zn(2+)</name>
        <dbReference type="ChEBI" id="CHEBI:29105"/>
        <label>2</label>
    </ligand>
</feature>
<feature type="binding site" evidence="4 5 12 13">
    <location>
        <position position="410"/>
    </location>
    <ligand>
        <name>Zn(2+)</name>
        <dbReference type="ChEBI" id="CHEBI:29105"/>
        <label>2</label>
    </ligand>
</feature>
<feature type="site" description="Indirect zinc-binding" evidence="4">
    <location>
        <position position="292"/>
    </location>
</feature>
<feature type="modified residue" description="N-acetylmethionine" evidence="15">
    <location>
        <position position="1"/>
    </location>
</feature>
<feature type="modified residue" description="Phosphoserine" evidence="14">
    <location>
        <position position="25"/>
    </location>
</feature>
<feature type="modified residue" description="Phosphoserine" evidence="14 16">
    <location>
        <position position="242"/>
    </location>
</feature>
<feature type="splice variant" id="VSP_014648" description="In isoform 2." evidence="7">
    <original>CKHVLVKDIKIIVLDLR</original>
    <variation>QKFLSGIISGTALEMEPLKIGYGPNGFPLLGISRSSSPSEQL</variation>
    <location>
        <begin position="420"/>
        <end position="436"/>
    </location>
</feature>
<feature type="sequence variant" id="VAR_051817" description="In dbSNP:rs12254856.">
    <original>S</original>
    <variation>N</variation>
    <location>
        <position position="196"/>
    </location>
</feature>
<feature type="sequence variant" id="VAR_051818" description="In dbSNP:rs34270879.">
    <original>E</original>
    <variation>K</variation>
    <location>
        <position position="204"/>
    </location>
</feature>
<feature type="sequence variant" id="VAR_051819" description="In dbSNP:rs9988723.">
    <original>A</original>
    <variation>T</variation>
    <location>
        <position position="210"/>
    </location>
</feature>
<feature type="mutagenesis site" description="Complete loss of catalytic activity." evidence="4 6">
    <original>E</original>
    <variation>A</variation>
    <location>
        <position position="292"/>
    </location>
</feature>
<feature type="mutagenesis site" description="3-fold decrease in substrate affinity." evidence="4">
    <original>E</original>
    <variation>A</variation>
    <location>
        <position position="329"/>
    </location>
</feature>
<feature type="mutagenesis site" description="12-fold decrease in substrate affinity, little effect on catalytic activity." evidence="4">
    <original>F</original>
    <variation>A</variation>
    <location>
        <position position="332"/>
    </location>
</feature>
<feature type="mutagenesis site" description="19-fold decrease in activity, no change in substrate affinity." evidence="4">
    <original>T</original>
    <variation>A</variation>
    <location>
        <position position="353"/>
    </location>
</feature>
<feature type="mutagenesis site" description="161-fold decrease in activity, no change in substrate affinity." evidence="4">
    <original>F</original>
    <variation>A</variation>
    <location>
        <position position="355"/>
    </location>
</feature>
<feature type="mutagenesis site" description="34-fold decrease in activity." evidence="4">
    <original>S</original>
    <variation>A</variation>
    <location>
        <position position="357"/>
    </location>
</feature>
<feature type="mutagenesis site" description="10-fold decrease in activity, no change in substrate affinity." evidence="4">
    <original>S</original>
    <variation>A</variation>
    <location>
        <position position="358"/>
    </location>
</feature>
<feature type="mutagenesis site" description="Complete loss of catalytic activity." evidence="4 6">
    <original>D</original>
    <variation>A</variation>
    <location>
        <position position="360"/>
    </location>
</feature>
<feature type="mutagenesis site" description="18-fold decrease in substrate affinity, little effect on catalytic activity." evidence="4">
    <original>M</original>
    <variation>A</variation>
    <location>
        <position position="370"/>
    </location>
</feature>
<feature type="mutagenesis site" description="402-fold decrease in activity, slight increase in substrate affinity." evidence="4">
    <original>C</original>
    <variation>S</variation>
    <location>
        <position position="402"/>
    </location>
</feature>
<feature type="mutagenesis site" description="35-fold decrease in activity, slight increase in substrate affinity." evidence="4">
    <original>F</original>
    <variation>A</variation>
    <location>
        <position position="407"/>
    </location>
</feature>
<feature type="strand" evidence="17">
    <location>
        <begin position="269"/>
        <end position="272"/>
    </location>
</feature>
<feature type="helix" evidence="17">
    <location>
        <begin position="275"/>
        <end position="287"/>
    </location>
</feature>
<feature type="turn" evidence="17">
    <location>
        <begin position="288"/>
        <end position="290"/>
    </location>
</feature>
<feature type="strand" evidence="17">
    <location>
        <begin position="294"/>
        <end position="302"/>
    </location>
</feature>
<feature type="strand" evidence="17">
    <location>
        <begin position="305"/>
        <end position="313"/>
    </location>
</feature>
<feature type="strand" evidence="17">
    <location>
        <begin position="316"/>
        <end position="319"/>
    </location>
</feature>
<feature type="strand" evidence="17">
    <location>
        <begin position="322"/>
        <end position="325"/>
    </location>
</feature>
<feature type="helix" evidence="17">
    <location>
        <begin position="328"/>
        <end position="338"/>
    </location>
</feature>
<feature type="strand" evidence="17">
    <location>
        <begin position="341"/>
        <end position="348"/>
    </location>
</feature>
<feature type="strand" evidence="17">
    <location>
        <begin position="350"/>
        <end position="352"/>
    </location>
</feature>
<feature type="helix" evidence="17">
    <location>
        <begin position="358"/>
        <end position="370"/>
    </location>
</feature>
<feature type="strand" evidence="17">
    <location>
        <begin position="375"/>
        <end position="380"/>
    </location>
</feature>
<feature type="helix" evidence="17">
    <location>
        <begin position="381"/>
        <end position="383"/>
    </location>
</feature>
<feature type="strand" evidence="17">
    <location>
        <begin position="385"/>
        <end position="391"/>
    </location>
</feature>
<feature type="helix" evidence="17">
    <location>
        <begin position="393"/>
        <end position="401"/>
    </location>
</feature>
<feature type="strand" evidence="17">
    <location>
        <begin position="416"/>
        <end position="419"/>
    </location>
</feature>
<feature type="strand" evidence="17">
    <location>
        <begin position="421"/>
        <end position="426"/>
    </location>
</feature>
<feature type="strand" evidence="17">
    <location>
        <begin position="431"/>
        <end position="434"/>
    </location>
</feature>
<comment type="function">
    <text evidence="4 6">Zinc metalloprotease that specifically cleaves 'Lys-63'-linked polyubiquitin chains (PubMed:18758443, PubMed:35114100). Acts as a positive regulator of the TORC1 signaling pathway by mediating 'Lys-63'-linked deubiquitination of SESN2, thereby inhibiting SESN2-interaction with the GATOR2 complex (PubMed:35114100). Does not cleave 'Lys-48'-linked polyubiquitin chains (PubMed:18758443).</text>
</comment>
<comment type="cofactor">
    <cofactor evidence="4">
        <name>Zn(2+)</name>
        <dbReference type="ChEBI" id="CHEBI:29105"/>
    </cofactor>
    <text evidence="4">Binds 2 Zn(2+) ions per subunit.</text>
</comment>
<comment type="activity regulation">
    <text evidence="5">Inhibited by UbV(SP.1), an ubiquitin variant that also inhibits STAMBP.</text>
</comment>
<comment type="interaction">
    <interactant intactId="EBI-745021">
        <id>Q96FJ0</id>
    </interactant>
    <interactant intactId="EBI-739580">
        <id>Q13137</id>
        <label>CALCOCO2</label>
    </interactant>
    <organismsDiffer>false</organismsDiffer>
    <experiments>3</experiments>
</comment>
<comment type="interaction">
    <interactant intactId="EBI-745021">
        <id>Q96FJ0</id>
    </interactant>
    <interactant intactId="EBI-739498">
        <id>Q9P209</id>
        <label>CEP72</label>
    </interactant>
    <organismsDiffer>false</organismsDiffer>
    <experiments>8</experiments>
</comment>
<comment type="interaction">
    <interactant intactId="EBI-745021">
        <id>Q96FJ0</id>
    </interactant>
    <interactant intactId="EBI-17857617">
        <id>Q5JQS6</id>
        <label>GCSAML</label>
    </interactant>
    <organismsDiffer>false</organismsDiffer>
    <experiments>3</experiments>
</comment>
<comment type="interaction">
    <interactant intactId="EBI-745021">
        <id>Q96FJ0</id>
    </interactant>
    <interactant intactId="EBI-1104907">
        <id>Q3T906</id>
        <label>GNPTAB</label>
    </interactant>
    <organismsDiffer>false</organismsDiffer>
    <experiments>3</experiments>
</comment>
<comment type="interaction">
    <interactant intactId="EBI-745021">
        <id>Q96FJ0</id>
    </interactant>
    <interactant intactId="EBI-618309">
        <id>Q08379</id>
        <label>GOLGA2</label>
    </interactant>
    <organismsDiffer>false</organismsDiffer>
    <experiments>3</experiments>
</comment>
<comment type="interaction">
    <interactant intactId="EBI-745021">
        <id>Q96FJ0</id>
    </interactant>
    <interactant intactId="EBI-5916454">
        <id>A6NEM1</id>
        <label>GOLGA6L9</label>
    </interactant>
    <organismsDiffer>false</organismsDiffer>
    <experiments>3</experiments>
</comment>
<comment type="interaction">
    <interactant intactId="EBI-745021">
        <id>Q96FJ0</id>
    </interactant>
    <interactant intactId="EBI-747204">
        <id>Q9UKT9</id>
        <label>IKZF3</label>
    </interactant>
    <organismsDiffer>false</organismsDiffer>
    <experiments>3</experiments>
</comment>
<comment type="interaction">
    <interactant intactId="EBI-745021">
        <id>Q96FJ0</id>
    </interactant>
    <interactant intactId="EBI-6509505">
        <id>Q0VD86</id>
        <label>INCA1</label>
    </interactant>
    <organismsDiffer>false</organismsDiffer>
    <experiments>3</experiments>
</comment>
<comment type="interaction">
    <interactant intactId="EBI-745021">
        <id>Q96FJ0</id>
    </interactant>
    <interactant intactId="EBI-10232942">
        <id>Q8IWV1</id>
        <label>LAX1</label>
    </interactant>
    <organismsDiffer>false</organismsDiffer>
    <experiments>3</experiments>
</comment>
<comment type="interaction">
    <interactant intactId="EBI-745021">
        <id>Q96FJ0</id>
    </interactant>
    <interactant intactId="EBI-5651459">
        <id>P43357</id>
        <label>MAGEA3</label>
    </interactant>
    <organismsDiffer>false</organismsDiffer>
    <experiments>6</experiments>
</comment>
<comment type="interaction">
    <interactant intactId="EBI-745021">
        <id>Q96FJ0</id>
    </interactant>
    <interactant intactId="EBI-1045155">
        <id>P43360</id>
        <label>MAGEA6</label>
    </interactant>
    <organismsDiffer>false</organismsDiffer>
    <experiments>6</experiments>
</comment>
<comment type="interaction">
    <interactant intactId="EBI-745021">
        <id>Q96FJ0</id>
    </interactant>
    <interactant intactId="EBI-12835568">
        <id>Q5VZ52</id>
        <label>MORN5</label>
    </interactant>
    <organismsDiffer>false</organismsDiffer>
    <experiments>3</experiments>
</comment>
<comment type="interaction">
    <interactant intactId="EBI-745021">
        <id>Q96FJ0</id>
    </interactant>
    <interactant intactId="EBI-742388">
        <id>Q9H8W4</id>
        <label>PLEKHF2</label>
    </interactant>
    <organismsDiffer>false</organismsDiffer>
    <experiments>3</experiments>
</comment>
<comment type="interaction">
    <interactant intactId="EBI-745021">
        <id>Q96FJ0</id>
    </interactant>
    <interactant intactId="EBI-302345">
        <id>Q8ND90</id>
        <label>PNMA1</label>
    </interactant>
    <organismsDiffer>false</organismsDiffer>
    <experiments>3</experiments>
</comment>
<comment type="interaction">
    <interactant intactId="EBI-745021">
        <id>Q96FJ0</id>
    </interactant>
    <interactant intactId="EBI-752037">
        <id>P61019</id>
        <label>RAB2A</label>
    </interactant>
    <organismsDiffer>false</organismsDiffer>
    <experiments>10</experiments>
</comment>
<comment type="interaction">
    <interactant intactId="EBI-745021">
        <id>Q96FJ0</id>
    </interactant>
    <interactant intactId="EBI-5542466">
        <id>Q8WUD1</id>
        <label>RAB2B</label>
    </interactant>
    <organismsDiffer>false</organismsDiffer>
    <experiments>3</experiments>
</comment>
<comment type="interaction">
    <interactant intactId="EBI-745021">
        <id>Q96FJ0</id>
    </interactant>
    <interactant intactId="EBI-10829018">
        <id>Q04864-2</id>
        <label>REL</label>
    </interactant>
    <organismsDiffer>false</organismsDiffer>
    <experiments>3</experiments>
</comment>
<comment type="interaction">
    <interactant intactId="EBI-745021">
        <id>Q96FJ0</id>
    </interactant>
    <interactant intactId="EBI-724829">
        <id>Q9H0A6</id>
        <label>RNF32</label>
    </interactant>
    <organismsDiffer>false</organismsDiffer>
    <experiments>2</experiments>
</comment>
<comment type="interaction">
    <interactant intactId="EBI-745021">
        <id>Q96FJ0</id>
    </interactant>
    <interactant intactId="EBI-2555428">
        <id>Q9BWJ5</id>
        <label>SF3B5</label>
    </interactant>
    <organismsDiffer>false</organismsDiffer>
    <experiments>3</experiments>
</comment>
<comment type="interaction">
    <interactant intactId="EBI-745021">
        <id>Q96FJ0</id>
    </interactant>
    <interactant intactId="EBI-533224">
        <id>P15884</id>
        <label>TCF4</label>
    </interactant>
    <organismsDiffer>false</organismsDiffer>
    <experiments>3</experiments>
</comment>
<comment type="interaction">
    <interactant intactId="EBI-745021">
        <id>Q96FJ0</id>
    </interactant>
    <interactant intactId="EBI-719493">
        <id>P14373</id>
        <label>TRIM27</label>
    </interactant>
    <organismsDiffer>false</organismsDiffer>
    <experiments>6</experiments>
</comment>
<comment type="interaction">
    <interactant intactId="EBI-745021">
        <id>Q96FJ0</id>
    </interactant>
    <interactant intactId="EBI-5667516">
        <id>Q9Y2P0</id>
        <label>ZNF835</label>
    </interactant>
    <organismsDiffer>false</organismsDiffer>
    <experiments>3</experiments>
</comment>
<comment type="interaction">
    <interactant intactId="EBI-745021">
        <id>Q96FJ0</id>
    </interactant>
    <interactant intactId="EBI-527853">
        <id>Q9UGI0</id>
        <label>ZRANB1</label>
    </interactant>
    <organismsDiffer>false</organismsDiffer>
    <experiments>3</experiments>
</comment>
<comment type="alternative products">
    <event type="alternative splicing"/>
    <isoform>
        <id>Q96FJ0-1</id>
        <name>1</name>
        <sequence type="displayed"/>
    </isoform>
    <isoform>
        <id>Q96FJ0-2</id>
        <name>2</name>
        <sequence type="described" ref="VSP_014648"/>
    </isoform>
</comment>
<comment type="tissue specificity">
    <text evidence="3">Ubiquitously expressed.</text>
</comment>
<comment type="domain">
    <text evidence="1">The JAMM motif is essential for the protease activity.</text>
</comment>
<comment type="similarity">
    <text evidence="10">Belongs to the peptidase M67C family.</text>
</comment>
<comment type="sequence caution" evidence="10">
    <conflict type="erroneous initiation">
        <sequence resource="EMBL-CDS" id="BAA92611"/>
    </conflict>
</comment>
<organism>
    <name type="scientific">Homo sapiens</name>
    <name type="common">Human</name>
    <dbReference type="NCBI Taxonomy" id="9606"/>
    <lineage>
        <taxon>Eukaryota</taxon>
        <taxon>Metazoa</taxon>
        <taxon>Chordata</taxon>
        <taxon>Craniata</taxon>
        <taxon>Vertebrata</taxon>
        <taxon>Euteleostomi</taxon>
        <taxon>Mammalia</taxon>
        <taxon>Eutheria</taxon>
        <taxon>Euarchontoglires</taxon>
        <taxon>Primates</taxon>
        <taxon>Haplorrhini</taxon>
        <taxon>Catarrhini</taxon>
        <taxon>Hominidae</taxon>
        <taxon>Homo</taxon>
    </lineage>
</organism>
<proteinExistence type="evidence at protein level"/>
<dbReference type="EC" id="3.4.19.-" evidence="6"/>
<dbReference type="EMBL" id="AB010120">
    <property type="protein sequence ID" value="BAC77766.1"/>
    <property type="molecule type" value="mRNA"/>
</dbReference>
<dbReference type="EMBL" id="AB037794">
    <property type="protein sequence ID" value="BAA92611.1"/>
    <property type="status" value="ALT_INIT"/>
    <property type="molecule type" value="mRNA"/>
</dbReference>
<dbReference type="EMBL" id="AK056086">
    <property type="protein sequence ID" value="BAG51619.1"/>
    <property type="molecule type" value="mRNA"/>
</dbReference>
<dbReference type="EMBL" id="AL157394">
    <property type="status" value="NOT_ANNOTATED_CDS"/>
    <property type="molecule type" value="Genomic_DNA"/>
</dbReference>
<dbReference type="EMBL" id="CH471066">
    <property type="protein sequence ID" value="EAW50156.1"/>
    <property type="molecule type" value="Genomic_DNA"/>
</dbReference>
<dbReference type="EMBL" id="BC010846">
    <property type="protein sequence ID" value="AAH10846.2"/>
    <property type="molecule type" value="mRNA"/>
</dbReference>
<dbReference type="CCDS" id="CCDS7391.1">
    <molecule id="Q96FJ0-1"/>
</dbReference>
<dbReference type="RefSeq" id="NP_065850.1">
    <molecule id="Q96FJ0-1"/>
    <property type="nucleotide sequence ID" value="NM_020799.4"/>
</dbReference>
<dbReference type="RefSeq" id="XP_006717991.1">
    <property type="nucleotide sequence ID" value="XM_006717928.2"/>
</dbReference>
<dbReference type="RefSeq" id="XP_006717993.1">
    <molecule id="Q96FJ0-1"/>
    <property type="nucleotide sequence ID" value="XM_006717930.4"/>
</dbReference>
<dbReference type="RefSeq" id="XP_011538285.1">
    <molecule id="Q96FJ0-1"/>
    <property type="nucleotide sequence ID" value="XM_011539983.2"/>
</dbReference>
<dbReference type="RefSeq" id="XP_011538287.1">
    <molecule id="Q96FJ0-1"/>
    <property type="nucleotide sequence ID" value="XM_011539985.3"/>
</dbReference>
<dbReference type="RefSeq" id="XP_016871942.1">
    <property type="nucleotide sequence ID" value="XM_017016453.1"/>
</dbReference>
<dbReference type="RefSeq" id="XP_016871943.1">
    <property type="nucleotide sequence ID" value="XM_017016454.1"/>
</dbReference>
<dbReference type="RefSeq" id="XP_016871944.1">
    <property type="nucleotide sequence ID" value="XM_017016455.1"/>
</dbReference>
<dbReference type="RefSeq" id="XP_016871945.1">
    <molecule id="Q96FJ0-1"/>
    <property type="nucleotide sequence ID" value="XM_017016456.2"/>
</dbReference>
<dbReference type="RefSeq" id="XP_047281507.1">
    <molecule id="Q96FJ0-1"/>
    <property type="nucleotide sequence ID" value="XM_047425551.1"/>
</dbReference>
<dbReference type="RefSeq" id="XP_047281508.1">
    <molecule id="Q96FJ0-1"/>
    <property type="nucleotide sequence ID" value="XM_047425552.1"/>
</dbReference>
<dbReference type="RefSeq" id="XP_047281509.1">
    <molecule id="Q96FJ0-1"/>
    <property type="nucleotide sequence ID" value="XM_047425553.1"/>
</dbReference>
<dbReference type="RefSeq" id="XP_047281510.1">
    <molecule id="Q96FJ0-1"/>
    <property type="nucleotide sequence ID" value="XM_047425554.1"/>
</dbReference>
<dbReference type="RefSeq" id="XP_054222371.1">
    <molecule id="Q96FJ0-1"/>
    <property type="nucleotide sequence ID" value="XM_054366396.1"/>
</dbReference>
<dbReference type="RefSeq" id="XP_054222372.1">
    <molecule id="Q96FJ0-1"/>
    <property type="nucleotide sequence ID" value="XM_054366397.1"/>
</dbReference>
<dbReference type="RefSeq" id="XP_054222373.1">
    <molecule id="Q96FJ0-1"/>
    <property type="nucleotide sequence ID" value="XM_054366398.1"/>
</dbReference>
<dbReference type="RefSeq" id="XP_054222374.1">
    <molecule id="Q96FJ0-1"/>
    <property type="nucleotide sequence ID" value="XM_054366399.1"/>
</dbReference>
<dbReference type="RefSeq" id="XP_054222375.1">
    <molecule id="Q96FJ0-1"/>
    <property type="nucleotide sequence ID" value="XM_054366400.1"/>
</dbReference>
<dbReference type="RefSeq" id="XP_054222376.1">
    <molecule id="Q96FJ0-1"/>
    <property type="nucleotide sequence ID" value="XM_054366401.1"/>
</dbReference>
<dbReference type="RefSeq" id="XP_054222377.1">
    <molecule id="Q96FJ0-1"/>
    <property type="nucleotide sequence ID" value="XM_054366402.1"/>
</dbReference>
<dbReference type="RefSeq" id="XP_054222378.1">
    <molecule id="Q96FJ0-1"/>
    <property type="nucleotide sequence ID" value="XM_054366403.1"/>
</dbReference>
<dbReference type="PDB" id="2ZNR">
    <property type="method" value="X-ray"/>
    <property type="resolution" value="1.20 A"/>
    <property type="chains" value="A=264-436"/>
</dbReference>
<dbReference type="PDB" id="2ZNV">
    <property type="method" value="X-ray"/>
    <property type="resolution" value="1.60 A"/>
    <property type="chains" value="A/D=264-436"/>
</dbReference>
<dbReference type="PDB" id="7L97">
    <property type="method" value="X-ray"/>
    <property type="resolution" value="2.01 A"/>
    <property type="chains" value="A=263-436"/>
</dbReference>
<dbReference type="PDBsum" id="2ZNR"/>
<dbReference type="PDBsum" id="2ZNV"/>
<dbReference type="PDBsum" id="7L97"/>
<dbReference type="SMR" id="Q96FJ0"/>
<dbReference type="BioGRID" id="121614">
    <property type="interactions" value="73"/>
</dbReference>
<dbReference type="FunCoup" id="Q96FJ0">
    <property type="interactions" value="633"/>
</dbReference>
<dbReference type="IntAct" id="Q96FJ0">
    <property type="interactions" value="62"/>
</dbReference>
<dbReference type="MINT" id="Q96FJ0"/>
<dbReference type="STRING" id="9606.ENSP00000360992"/>
<dbReference type="BindingDB" id="Q96FJ0"/>
<dbReference type="ChEMBL" id="CHEMBL4630848"/>
<dbReference type="MEROPS" id="M67.003"/>
<dbReference type="iPTMnet" id="Q96FJ0"/>
<dbReference type="PhosphoSitePlus" id="Q96FJ0"/>
<dbReference type="BioMuta" id="STAMBPL1"/>
<dbReference type="DMDM" id="71153542"/>
<dbReference type="jPOST" id="Q96FJ0"/>
<dbReference type="MassIVE" id="Q96FJ0"/>
<dbReference type="PaxDb" id="9606-ENSP00000360994"/>
<dbReference type="PeptideAtlas" id="Q96FJ0"/>
<dbReference type="ProteomicsDB" id="76533">
    <molecule id="Q96FJ0-1"/>
</dbReference>
<dbReference type="ProteomicsDB" id="76534">
    <molecule id="Q96FJ0-2"/>
</dbReference>
<dbReference type="Pumba" id="Q96FJ0"/>
<dbReference type="Antibodypedia" id="45641">
    <property type="antibodies" value="109 antibodies from 22 providers"/>
</dbReference>
<dbReference type="DNASU" id="57559"/>
<dbReference type="Ensembl" id="ENST00000371924.5">
    <molecule id="Q96FJ0-1"/>
    <property type="protein sequence ID" value="ENSP00000360992.1"/>
    <property type="gene ID" value="ENSG00000138134.12"/>
</dbReference>
<dbReference type="Ensembl" id="ENST00000371926.8">
    <molecule id="Q96FJ0-1"/>
    <property type="protein sequence ID" value="ENSP00000360994.3"/>
    <property type="gene ID" value="ENSG00000138134.12"/>
</dbReference>
<dbReference type="Ensembl" id="ENST00000371927.7">
    <molecule id="Q96FJ0-2"/>
    <property type="protein sequence ID" value="ENSP00000360995.3"/>
    <property type="gene ID" value="ENSG00000138134.12"/>
</dbReference>
<dbReference type="GeneID" id="57559"/>
<dbReference type="KEGG" id="hsa:57559"/>
<dbReference type="MANE-Select" id="ENST00000371926.8">
    <property type="protein sequence ID" value="ENSP00000360994.3"/>
    <property type="RefSeq nucleotide sequence ID" value="NM_020799.4"/>
    <property type="RefSeq protein sequence ID" value="NP_065850.1"/>
</dbReference>
<dbReference type="UCSC" id="uc001kfk.5">
    <molecule id="Q96FJ0-1"/>
    <property type="organism name" value="human"/>
</dbReference>
<dbReference type="AGR" id="HGNC:24105"/>
<dbReference type="CTD" id="57559"/>
<dbReference type="DisGeNET" id="57559"/>
<dbReference type="GeneCards" id="STAMBPL1"/>
<dbReference type="HGNC" id="HGNC:24105">
    <property type="gene designation" value="STAMBPL1"/>
</dbReference>
<dbReference type="HPA" id="ENSG00000138134">
    <property type="expression patterns" value="Tissue enhanced (adrenal)"/>
</dbReference>
<dbReference type="MalaCards" id="STAMBPL1"/>
<dbReference type="MIM" id="612352">
    <property type="type" value="gene"/>
</dbReference>
<dbReference type="neXtProt" id="NX_Q96FJ0"/>
<dbReference type="OpenTargets" id="ENSG00000138134"/>
<dbReference type="PharmGKB" id="PA142670864"/>
<dbReference type="VEuPathDB" id="HostDB:ENSG00000138134"/>
<dbReference type="eggNOG" id="KOG2880">
    <property type="taxonomic scope" value="Eukaryota"/>
</dbReference>
<dbReference type="GeneTree" id="ENSGT00940000153710"/>
<dbReference type="HOGENOM" id="CLU_023304_0_1_1"/>
<dbReference type="InParanoid" id="Q96FJ0"/>
<dbReference type="OMA" id="QHKNKCK"/>
<dbReference type="OrthoDB" id="3640at2759"/>
<dbReference type="PAN-GO" id="Q96FJ0">
    <property type="GO annotations" value="4 GO annotations based on evolutionary models"/>
</dbReference>
<dbReference type="PhylomeDB" id="Q96FJ0"/>
<dbReference type="TreeFam" id="TF323215"/>
<dbReference type="PathwayCommons" id="Q96FJ0"/>
<dbReference type="Reactome" id="R-HSA-5689901">
    <property type="pathway name" value="Metalloprotease DUBs"/>
</dbReference>
<dbReference type="SignaLink" id="Q96FJ0"/>
<dbReference type="BioGRID-ORCS" id="57559">
    <property type="hits" value="14 hits in 1189 CRISPR screens"/>
</dbReference>
<dbReference type="ChiTaRS" id="STAMBPL1">
    <property type="organism name" value="human"/>
</dbReference>
<dbReference type="EvolutionaryTrace" id="Q96FJ0"/>
<dbReference type="GeneWiki" id="STAMBPL1"/>
<dbReference type="GenomeRNAi" id="57559"/>
<dbReference type="Pharos" id="Q96FJ0">
    <property type="development level" value="Tbio"/>
</dbReference>
<dbReference type="PRO" id="PR:Q96FJ0"/>
<dbReference type="Proteomes" id="UP000005640">
    <property type="component" value="Chromosome 10"/>
</dbReference>
<dbReference type="RNAct" id="Q96FJ0">
    <property type="molecule type" value="protein"/>
</dbReference>
<dbReference type="Bgee" id="ENSG00000138134">
    <property type="expression patterns" value="Expressed in ileal mucosa and 183 other cell types or tissues"/>
</dbReference>
<dbReference type="GO" id="GO:0005829">
    <property type="term" value="C:cytosol"/>
    <property type="evidence" value="ECO:0000304"/>
    <property type="project" value="Reactome"/>
</dbReference>
<dbReference type="GO" id="GO:0005768">
    <property type="term" value="C:endosome"/>
    <property type="evidence" value="ECO:0000318"/>
    <property type="project" value="GO_Central"/>
</dbReference>
<dbReference type="GO" id="GO:0016020">
    <property type="term" value="C:membrane"/>
    <property type="evidence" value="ECO:0007005"/>
    <property type="project" value="UniProtKB"/>
</dbReference>
<dbReference type="GO" id="GO:0061578">
    <property type="term" value="F:K63-linked deubiquitinase activity"/>
    <property type="evidence" value="ECO:0000314"/>
    <property type="project" value="UniProtKB"/>
</dbReference>
<dbReference type="GO" id="GO:0046872">
    <property type="term" value="F:metal ion binding"/>
    <property type="evidence" value="ECO:0007669"/>
    <property type="project" value="UniProtKB-KW"/>
</dbReference>
<dbReference type="GO" id="GO:0140492">
    <property type="term" value="F:metal-dependent deubiquitinase activity"/>
    <property type="evidence" value="ECO:0007669"/>
    <property type="project" value="InterPro"/>
</dbReference>
<dbReference type="GO" id="GO:0071233">
    <property type="term" value="P:cellular response to L-leucine"/>
    <property type="evidence" value="ECO:0000314"/>
    <property type="project" value="UniProt"/>
</dbReference>
<dbReference type="GO" id="GO:1904263">
    <property type="term" value="P:positive regulation of TORC1 signaling"/>
    <property type="evidence" value="ECO:0000314"/>
    <property type="project" value="UniProt"/>
</dbReference>
<dbReference type="GO" id="GO:0016579">
    <property type="term" value="P:protein deubiquitination"/>
    <property type="evidence" value="ECO:0000304"/>
    <property type="project" value="Reactome"/>
</dbReference>
<dbReference type="GO" id="GO:0070536">
    <property type="term" value="P:protein K63-linked deubiquitination"/>
    <property type="evidence" value="ECO:0007669"/>
    <property type="project" value="InterPro"/>
</dbReference>
<dbReference type="GO" id="GO:0006508">
    <property type="term" value="P:proteolysis"/>
    <property type="evidence" value="ECO:0007669"/>
    <property type="project" value="UniProtKB-KW"/>
</dbReference>
<dbReference type="CDD" id="cd08066">
    <property type="entry name" value="MPN_AMSH_like"/>
    <property type="match status" value="1"/>
</dbReference>
<dbReference type="FunFam" id="1.20.58.80:FF:000012">
    <property type="entry name" value="AMSH-like protease isoform X1"/>
    <property type="match status" value="1"/>
</dbReference>
<dbReference type="FunFam" id="3.40.140.10:FF:000010">
    <property type="entry name" value="AMSH-like protease isoform X1"/>
    <property type="match status" value="1"/>
</dbReference>
<dbReference type="Gene3D" id="3.40.140.10">
    <property type="entry name" value="Cytidine Deaminase, domain 2"/>
    <property type="match status" value="1"/>
</dbReference>
<dbReference type="Gene3D" id="1.20.58.80">
    <property type="entry name" value="Phosphotransferase system, lactose/cellobiose-type IIA subunit"/>
    <property type="match status" value="1"/>
</dbReference>
<dbReference type="InterPro" id="IPR000555">
    <property type="entry name" value="JAMM/MPN+_dom"/>
</dbReference>
<dbReference type="InterPro" id="IPR037518">
    <property type="entry name" value="MPN"/>
</dbReference>
<dbReference type="InterPro" id="IPR044098">
    <property type="entry name" value="STAMBP/STALP-like_MPN"/>
</dbReference>
<dbReference type="InterPro" id="IPR015063">
    <property type="entry name" value="USP8_dimer"/>
</dbReference>
<dbReference type="PANTHER" id="PTHR12947">
    <property type="entry name" value="AMSH-LIKE PROTEASE"/>
    <property type="match status" value="1"/>
</dbReference>
<dbReference type="PANTHER" id="PTHR12947:SF7">
    <property type="entry name" value="AMSH-LIKE PROTEASE"/>
    <property type="match status" value="1"/>
</dbReference>
<dbReference type="Pfam" id="PF01398">
    <property type="entry name" value="JAB"/>
    <property type="match status" value="1"/>
</dbReference>
<dbReference type="Pfam" id="PF08969">
    <property type="entry name" value="USP8_dimer"/>
    <property type="match status" value="1"/>
</dbReference>
<dbReference type="SMART" id="SM00232">
    <property type="entry name" value="JAB_MPN"/>
    <property type="match status" value="1"/>
</dbReference>
<dbReference type="SUPFAM" id="SSF102712">
    <property type="entry name" value="JAB1/MPN domain"/>
    <property type="match status" value="1"/>
</dbReference>
<dbReference type="SUPFAM" id="SSF140856">
    <property type="entry name" value="USP8 N-terminal domain-like"/>
    <property type="match status" value="1"/>
</dbReference>
<dbReference type="PROSITE" id="PS50249">
    <property type="entry name" value="MPN"/>
    <property type="match status" value="1"/>
</dbReference>
<name>STALP_HUMAN</name>
<gene>
    <name evidence="9 11" type="primary">STAMBPL1</name>
    <name type="synonym">AMSHLP</name>
    <name type="synonym">KIAA1373</name>
</gene>
<protein>
    <recommendedName>
        <fullName evidence="8">AMSH-like protease</fullName>
        <shortName evidence="8">AMSH-LP</shortName>
        <ecNumber evidence="6">3.4.19.-</ecNumber>
    </recommendedName>
    <alternativeName>
        <fullName>STAM-binding protein-like 1</fullName>
    </alternativeName>
</protein>
<reference key="1">
    <citation type="journal article" date="2003" name="Biochem. Biophys. Res. Commun.">
        <title>Identification of AMSH-LP containing a Jab1/MPN domain metalloenzyme motif.</title>
        <authorList>
            <person name="Kikuchi K."/>
            <person name="Ishii N."/>
            <person name="Asano H."/>
            <person name="Sugamura K."/>
        </authorList>
    </citation>
    <scope>NUCLEOTIDE SEQUENCE [MRNA] (ISOFORM 1)</scope>
    <scope>TISSUE SPECIFICITY</scope>
    <scope>SUBCELLULAR LOCATION</scope>
    <source>
        <tissue>Peripheral blood lymphocyte</tissue>
    </source>
</reference>
<reference key="2">
    <citation type="journal article" date="2000" name="DNA Res.">
        <title>Prediction of the coding sequences of unidentified human genes. XVI. The complete sequences of 150 new cDNA clones from brain which code for large proteins in vitro.</title>
        <authorList>
            <person name="Nagase T."/>
            <person name="Kikuno R."/>
            <person name="Ishikawa K."/>
            <person name="Hirosawa M."/>
            <person name="Ohara O."/>
        </authorList>
    </citation>
    <scope>NUCLEOTIDE SEQUENCE [LARGE SCALE MRNA] (ISOFORM 2)</scope>
    <source>
        <tissue>Brain</tissue>
    </source>
</reference>
<reference key="3">
    <citation type="journal article" date="2004" name="Nat. Genet.">
        <title>Complete sequencing and characterization of 21,243 full-length human cDNAs.</title>
        <authorList>
            <person name="Ota T."/>
            <person name="Suzuki Y."/>
            <person name="Nishikawa T."/>
            <person name="Otsuki T."/>
            <person name="Sugiyama T."/>
            <person name="Irie R."/>
            <person name="Wakamatsu A."/>
            <person name="Hayashi K."/>
            <person name="Sato H."/>
            <person name="Nagai K."/>
            <person name="Kimura K."/>
            <person name="Makita H."/>
            <person name="Sekine M."/>
            <person name="Obayashi M."/>
            <person name="Nishi T."/>
            <person name="Shibahara T."/>
            <person name="Tanaka T."/>
            <person name="Ishii S."/>
            <person name="Yamamoto J."/>
            <person name="Saito K."/>
            <person name="Kawai Y."/>
            <person name="Isono Y."/>
            <person name="Nakamura Y."/>
            <person name="Nagahari K."/>
            <person name="Murakami K."/>
            <person name="Yasuda T."/>
            <person name="Iwayanagi T."/>
            <person name="Wagatsuma M."/>
            <person name="Shiratori A."/>
            <person name="Sudo H."/>
            <person name="Hosoiri T."/>
            <person name="Kaku Y."/>
            <person name="Kodaira H."/>
            <person name="Kondo H."/>
            <person name="Sugawara M."/>
            <person name="Takahashi M."/>
            <person name="Kanda K."/>
            <person name="Yokoi T."/>
            <person name="Furuya T."/>
            <person name="Kikkawa E."/>
            <person name="Omura Y."/>
            <person name="Abe K."/>
            <person name="Kamihara K."/>
            <person name="Katsuta N."/>
            <person name="Sato K."/>
            <person name="Tanikawa M."/>
            <person name="Yamazaki M."/>
            <person name="Ninomiya K."/>
            <person name="Ishibashi T."/>
            <person name="Yamashita H."/>
            <person name="Murakawa K."/>
            <person name="Fujimori K."/>
            <person name="Tanai H."/>
            <person name="Kimata M."/>
            <person name="Watanabe M."/>
            <person name="Hiraoka S."/>
            <person name="Chiba Y."/>
            <person name="Ishida S."/>
            <person name="Ono Y."/>
            <person name="Takiguchi S."/>
            <person name="Watanabe S."/>
            <person name="Yosida M."/>
            <person name="Hotuta T."/>
            <person name="Kusano J."/>
            <person name="Kanehori K."/>
            <person name="Takahashi-Fujii A."/>
            <person name="Hara H."/>
            <person name="Tanase T.-O."/>
            <person name="Nomura Y."/>
            <person name="Togiya S."/>
            <person name="Komai F."/>
            <person name="Hara R."/>
            <person name="Takeuchi K."/>
            <person name="Arita M."/>
            <person name="Imose N."/>
            <person name="Musashino K."/>
            <person name="Yuuki H."/>
            <person name="Oshima A."/>
            <person name="Sasaki N."/>
            <person name="Aotsuka S."/>
            <person name="Yoshikawa Y."/>
            <person name="Matsunawa H."/>
            <person name="Ichihara T."/>
            <person name="Shiohata N."/>
            <person name="Sano S."/>
            <person name="Moriya S."/>
            <person name="Momiyama H."/>
            <person name="Satoh N."/>
            <person name="Takami S."/>
            <person name="Terashima Y."/>
            <person name="Suzuki O."/>
            <person name="Nakagawa S."/>
            <person name="Senoh A."/>
            <person name="Mizoguchi H."/>
            <person name="Goto Y."/>
            <person name="Shimizu F."/>
            <person name="Wakebe H."/>
            <person name="Hishigaki H."/>
            <person name="Watanabe T."/>
            <person name="Sugiyama A."/>
            <person name="Takemoto M."/>
            <person name="Kawakami B."/>
            <person name="Yamazaki M."/>
            <person name="Watanabe K."/>
            <person name="Kumagai A."/>
            <person name="Itakura S."/>
            <person name="Fukuzumi Y."/>
            <person name="Fujimori Y."/>
            <person name="Komiyama M."/>
            <person name="Tashiro H."/>
            <person name="Tanigami A."/>
            <person name="Fujiwara T."/>
            <person name="Ono T."/>
            <person name="Yamada K."/>
            <person name="Fujii Y."/>
            <person name="Ozaki K."/>
            <person name="Hirao M."/>
            <person name="Ohmori Y."/>
            <person name="Kawabata A."/>
            <person name="Hikiji T."/>
            <person name="Kobatake N."/>
            <person name="Inagaki H."/>
            <person name="Ikema Y."/>
            <person name="Okamoto S."/>
            <person name="Okitani R."/>
            <person name="Kawakami T."/>
            <person name="Noguchi S."/>
            <person name="Itoh T."/>
            <person name="Shigeta K."/>
            <person name="Senba T."/>
            <person name="Matsumura K."/>
            <person name="Nakajima Y."/>
            <person name="Mizuno T."/>
            <person name="Morinaga M."/>
            <person name="Sasaki M."/>
            <person name="Togashi T."/>
            <person name="Oyama M."/>
            <person name="Hata H."/>
            <person name="Watanabe M."/>
            <person name="Komatsu T."/>
            <person name="Mizushima-Sugano J."/>
            <person name="Satoh T."/>
            <person name="Shirai Y."/>
            <person name="Takahashi Y."/>
            <person name="Nakagawa K."/>
            <person name="Okumura K."/>
            <person name="Nagase T."/>
            <person name="Nomura N."/>
            <person name="Kikuchi H."/>
            <person name="Masuho Y."/>
            <person name="Yamashita R."/>
            <person name="Nakai K."/>
            <person name="Yada T."/>
            <person name="Nakamura Y."/>
            <person name="Ohara O."/>
            <person name="Isogai T."/>
            <person name="Sugano S."/>
        </authorList>
    </citation>
    <scope>NUCLEOTIDE SEQUENCE [LARGE SCALE MRNA] (ISOFORM 1)</scope>
</reference>
<reference key="4">
    <citation type="journal article" date="2004" name="Nature">
        <title>The DNA sequence and comparative analysis of human chromosome 10.</title>
        <authorList>
            <person name="Deloukas P."/>
            <person name="Earthrowl M.E."/>
            <person name="Grafham D.V."/>
            <person name="Rubenfield M."/>
            <person name="French L."/>
            <person name="Steward C.A."/>
            <person name="Sims S.K."/>
            <person name="Jones M.C."/>
            <person name="Searle S."/>
            <person name="Scott C."/>
            <person name="Howe K."/>
            <person name="Hunt S.E."/>
            <person name="Andrews T.D."/>
            <person name="Gilbert J.G.R."/>
            <person name="Swarbreck D."/>
            <person name="Ashurst J.L."/>
            <person name="Taylor A."/>
            <person name="Battles J."/>
            <person name="Bird C.P."/>
            <person name="Ainscough R."/>
            <person name="Almeida J.P."/>
            <person name="Ashwell R.I.S."/>
            <person name="Ambrose K.D."/>
            <person name="Babbage A.K."/>
            <person name="Bagguley C.L."/>
            <person name="Bailey J."/>
            <person name="Banerjee R."/>
            <person name="Bates K."/>
            <person name="Beasley H."/>
            <person name="Bray-Allen S."/>
            <person name="Brown A.J."/>
            <person name="Brown J.Y."/>
            <person name="Burford D.C."/>
            <person name="Burrill W."/>
            <person name="Burton J."/>
            <person name="Cahill P."/>
            <person name="Camire D."/>
            <person name="Carter N.P."/>
            <person name="Chapman J.C."/>
            <person name="Clark S.Y."/>
            <person name="Clarke G."/>
            <person name="Clee C.M."/>
            <person name="Clegg S."/>
            <person name="Corby N."/>
            <person name="Coulson A."/>
            <person name="Dhami P."/>
            <person name="Dutta I."/>
            <person name="Dunn M."/>
            <person name="Faulkner L."/>
            <person name="Frankish A."/>
            <person name="Frankland J.A."/>
            <person name="Garner P."/>
            <person name="Garnett J."/>
            <person name="Gribble S."/>
            <person name="Griffiths C."/>
            <person name="Grocock R."/>
            <person name="Gustafson E."/>
            <person name="Hammond S."/>
            <person name="Harley J.L."/>
            <person name="Hart E."/>
            <person name="Heath P.D."/>
            <person name="Ho T.P."/>
            <person name="Hopkins B."/>
            <person name="Horne J."/>
            <person name="Howden P.J."/>
            <person name="Huckle E."/>
            <person name="Hynds C."/>
            <person name="Johnson C."/>
            <person name="Johnson D."/>
            <person name="Kana A."/>
            <person name="Kay M."/>
            <person name="Kimberley A.M."/>
            <person name="Kershaw J.K."/>
            <person name="Kokkinaki M."/>
            <person name="Laird G.K."/>
            <person name="Lawlor S."/>
            <person name="Lee H.M."/>
            <person name="Leongamornlert D.A."/>
            <person name="Laird G."/>
            <person name="Lloyd C."/>
            <person name="Lloyd D.M."/>
            <person name="Loveland J."/>
            <person name="Lovell J."/>
            <person name="McLaren S."/>
            <person name="McLay K.E."/>
            <person name="McMurray A."/>
            <person name="Mashreghi-Mohammadi M."/>
            <person name="Matthews L."/>
            <person name="Milne S."/>
            <person name="Nickerson T."/>
            <person name="Nguyen M."/>
            <person name="Overton-Larty E."/>
            <person name="Palmer S.A."/>
            <person name="Pearce A.V."/>
            <person name="Peck A.I."/>
            <person name="Pelan S."/>
            <person name="Phillimore B."/>
            <person name="Porter K."/>
            <person name="Rice C.M."/>
            <person name="Rogosin A."/>
            <person name="Ross M.T."/>
            <person name="Sarafidou T."/>
            <person name="Sehra H.K."/>
            <person name="Shownkeen R."/>
            <person name="Skuce C.D."/>
            <person name="Smith M."/>
            <person name="Standring L."/>
            <person name="Sycamore N."/>
            <person name="Tester J."/>
            <person name="Thorpe A."/>
            <person name="Torcasso W."/>
            <person name="Tracey A."/>
            <person name="Tromans A."/>
            <person name="Tsolas J."/>
            <person name="Wall M."/>
            <person name="Walsh J."/>
            <person name="Wang H."/>
            <person name="Weinstock K."/>
            <person name="West A.P."/>
            <person name="Willey D.L."/>
            <person name="Whitehead S.L."/>
            <person name="Wilming L."/>
            <person name="Wray P.W."/>
            <person name="Young L."/>
            <person name="Chen Y."/>
            <person name="Lovering R.C."/>
            <person name="Moschonas N.K."/>
            <person name="Siebert R."/>
            <person name="Fechtel K."/>
            <person name="Bentley D."/>
            <person name="Durbin R.M."/>
            <person name="Hubbard T."/>
            <person name="Doucette-Stamm L."/>
            <person name="Beck S."/>
            <person name="Smith D.R."/>
            <person name="Rogers J."/>
        </authorList>
    </citation>
    <scope>NUCLEOTIDE SEQUENCE [LARGE SCALE GENOMIC DNA]</scope>
</reference>
<reference key="5">
    <citation type="submission" date="2005-09" db="EMBL/GenBank/DDBJ databases">
        <authorList>
            <person name="Mural R.J."/>
            <person name="Istrail S."/>
            <person name="Sutton G.G."/>
            <person name="Florea L."/>
            <person name="Halpern A.L."/>
            <person name="Mobarry C.M."/>
            <person name="Lippert R."/>
            <person name="Walenz B."/>
            <person name="Shatkay H."/>
            <person name="Dew I."/>
            <person name="Miller J.R."/>
            <person name="Flanigan M.J."/>
            <person name="Edwards N.J."/>
            <person name="Bolanos R."/>
            <person name="Fasulo D."/>
            <person name="Halldorsson B.V."/>
            <person name="Hannenhalli S."/>
            <person name="Turner R."/>
            <person name="Yooseph S."/>
            <person name="Lu F."/>
            <person name="Nusskern D.R."/>
            <person name="Shue B.C."/>
            <person name="Zheng X.H."/>
            <person name="Zhong F."/>
            <person name="Delcher A.L."/>
            <person name="Huson D.H."/>
            <person name="Kravitz S.A."/>
            <person name="Mouchard L."/>
            <person name="Reinert K."/>
            <person name="Remington K.A."/>
            <person name="Clark A.G."/>
            <person name="Waterman M.S."/>
            <person name="Eichler E.E."/>
            <person name="Adams M.D."/>
            <person name="Hunkapiller M.W."/>
            <person name="Myers E.W."/>
            <person name="Venter J.C."/>
        </authorList>
    </citation>
    <scope>NUCLEOTIDE SEQUENCE [LARGE SCALE GENOMIC DNA]</scope>
</reference>
<reference key="6">
    <citation type="journal article" date="2004" name="Genome Res.">
        <title>The status, quality, and expansion of the NIH full-length cDNA project: the Mammalian Gene Collection (MGC).</title>
        <authorList>
            <consortium name="The MGC Project Team"/>
        </authorList>
    </citation>
    <scope>NUCLEOTIDE SEQUENCE [LARGE SCALE MRNA] (ISOFORM 1)</scope>
    <source>
        <tissue>Pancreas</tissue>
    </source>
</reference>
<reference key="7">
    <citation type="journal article" date="2008" name="Proc. Natl. Acad. Sci. U.S.A.">
        <title>A quantitative atlas of mitotic phosphorylation.</title>
        <authorList>
            <person name="Dephoure N."/>
            <person name="Zhou C."/>
            <person name="Villen J."/>
            <person name="Beausoleil S.A."/>
            <person name="Bakalarski C.E."/>
            <person name="Elledge S.J."/>
            <person name="Gygi S.P."/>
        </authorList>
    </citation>
    <scope>PHOSPHORYLATION [LARGE SCALE ANALYSIS] AT SER-25 AND SER-242</scope>
    <scope>IDENTIFICATION BY MASS SPECTROMETRY [LARGE SCALE ANALYSIS]</scope>
    <source>
        <tissue>Cervix carcinoma</tissue>
    </source>
</reference>
<reference key="8">
    <citation type="journal article" date="2012" name="Proc. Natl. Acad. Sci. U.S.A.">
        <title>N-terminal acetylome analyses and functional insights of the N-terminal acetyltransferase NatB.</title>
        <authorList>
            <person name="Van Damme P."/>
            <person name="Lasa M."/>
            <person name="Polevoda B."/>
            <person name="Gazquez C."/>
            <person name="Elosegui-Artola A."/>
            <person name="Kim D.S."/>
            <person name="De Juan-Pardo E."/>
            <person name="Demeyer K."/>
            <person name="Hole K."/>
            <person name="Larrea E."/>
            <person name="Timmerman E."/>
            <person name="Prieto J."/>
            <person name="Arnesen T."/>
            <person name="Sherman F."/>
            <person name="Gevaert K."/>
            <person name="Aldabe R."/>
        </authorList>
    </citation>
    <scope>ACETYLATION [LARGE SCALE ANALYSIS] AT MET-1</scope>
    <scope>IDENTIFICATION BY MASS SPECTROMETRY [LARGE SCALE ANALYSIS]</scope>
</reference>
<reference key="9">
    <citation type="journal article" date="2013" name="J. Proteome Res.">
        <title>Toward a comprehensive characterization of a human cancer cell phosphoproteome.</title>
        <authorList>
            <person name="Zhou H."/>
            <person name="Di Palma S."/>
            <person name="Preisinger C."/>
            <person name="Peng M."/>
            <person name="Polat A.N."/>
            <person name="Heck A.J."/>
            <person name="Mohammed S."/>
        </authorList>
    </citation>
    <scope>PHOSPHORYLATION [LARGE SCALE ANALYSIS] AT SER-242</scope>
    <scope>IDENTIFICATION BY MASS SPECTROMETRY [LARGE SCALE ANALYSIS]</scope>
    <source>
        <tissue>Cervix carcinoma</tissue>
    </source>
</reference>
<reference key="10">
    <citation type="journal article" date="2022" name="Mol. Cell">
        <title>E3 ligase RNF167 and deubiquitinase STAMBPL1 modulate mTOR and cancer progression.</title>
        <authorList>
            <person name="Wang D."/>
            <person name="Xu C."/>
            <person name="Yang W."/>
            <person name="Chen J."/>
            <person name="Ou Y."/>
            <person name="Guan Y."/>
            <person name="Guan J."/>
            <person name="Liu Y."/>
        </authorList>
    </citation>
    <scope>FUNCTION</scope>
    <scope>MUTAGENESIS OF GLU-292 AND ASP-360</scope>
</reference>
<reference key="11">
    <citation type="journal article" date="2008" name="Nature">
        <title>Structural basis for specific cleavage of Lys 63-linked polyubiquitin chains.</title>
        <authorList>
            <person name="Sato Y."/>
            <person name="Yoshikawa A."/>
            <person name="Yamagata A."/>
            <person name="Mimura H."/>
            <person name="Yamashita M."/>
            <person name="Ookata K."/>
            <person name="Nureki O."/>
            <person name="Iwai K."/>
            <person name="Komada M."/>
            <person name="Fukai S."/>
        </authorList>
    </citation>
    <scope>X-RAY CRYSTALLOGRAPHY (1.2 ANGSTROMS) OF 263-436 IN COMPLEXES WITH ZINC IONS AND WITH LYS-63-LINKED DI-UBIQUITIN</scope>
    <scope>FUNCTION</scope>
    <scope>COFACTOR</scope>
    <scope>MUTAGENESIS OF GLU-292; GLU-329; PHE-332; THR-353; PHE-355; SER-357; SER-358; ASP-360; MET-370; CYS-402 AND PHE-407</scope>
</reference>
<reference key="12">
    <citation type="journal article" date="2008" name="Nature">
        <authorList>
            <person name="Sato Y."/>
            <person name="Yoshikawa A."/>
            <person name="Yamagata A."/>
            <person name="Mimura H."/>
            <person name="Yamashita M."/>
            <person name="Ookata K."/>
            <person name="Nureki O."/>
            <person name="Iwai K."/>
            <person name="Komada M."/>
            <person name="Fukai S."/>
        </authorList>
    </citation>
    <scope>ERRATUM OF PUBMED:18758443</scope>
</reference>
<reference evidence="13" key="13">
    <citation type="journal article" date="2021" name="J. Biol. Chem.">
        <title>Structural and functional characterization of ubiquitin variant inhibitors for the JAMM-family deubiquitinases STAMBP and STAMBPL1.</title>
        <authorList>
            <person name="Guo Y."/>
            <person name="Liu Q."/>
            <person name="Mallette E."/>
            <person name="Caba C."/>
            <person name="Hou F."/>
            <person name="Fux J."/>
            <person name="LaPlante G."/>
            <person name="Dong A."/>
            <person name="Zhang Q."/>
            <person name="Zheng H."/>
            <person name="Tong Y."/>
            <person name="Zhang W."/>
        </authorList>
    </citation>
    <scope>X-RAY CRYSTALLOGRAPHY (2.01 ANGSTROMS) OF 263-436 IN COMPLEX WITH ZINC AND UBIQUITIN VARIANT INHIBITOR UBVSP.1</scope>
    <scope>ACTIVITY REGULATION</scope>
</reference>
<evidence type="ECO:0000250" key="1">
    <source>
        <dbReference type="UniProtKB" id="O35864"/>
    </source>
</evidence>
<evidence type="ECO:0000255" key="2">
    <source>
        <dbReference type="PROSITE-ProRule" id="PRU01182"/>
    </source>
</evidence>
<evidence type="ECO:0000269" key="3">
    <source>
    </source>
</evidence>
<evidence type="ECO:0000269" key="4">
    <source>
    </source>
</evidence>
<evidence type="ECO:0000269" key="5">
    <source>
    </source>
</evidence>
<evidence type="ECO:0000269" key="6">
    <source>
    </source>
</evidence>
<evidence type="ECO:0000303" key="7">
    <source>
    </source>
</evidence>
<evidence type="ECO:0000303" key="8">
    <source>
    </source>
</evidence>
<evidence type="ECO:0000303" key="9">
    <source>
    </source>
</evidence>
<evidence type="ECO:0000305" key="10"/>
<evidence type="ECO:0000312" key="11">
    <source>
        <dbReference type="HGNC" id="HGNC:24105"/>
    </source>
</evidence>
<evidence type="ECO:0007744" key="12">
    <source>
        <dbReference type="PDB" id="2ZNR"/>
    </source>
</evidence>
<evidence type="ECO:0007744" key="13">
    <source>
        <dbReference type="PDB" id="7L97"/>
    </source>
</evidence>
<evidence type="ECO:0007744" key="14">
    <source>
    </source>
</evidence>
<evidence type="ECO:0007744" key="15">
    <source>
    </source>
</evidence>
<evidence type="ECO:0007744" key="16">
    <source>
    </source>
</evidence>
<evidence type="ECO:0007829" key="17">
    <source>
        <dbReference type="PDB" id="2ZNR"/>
    </source>
</evidence>
<sequence length="436" mass="49783">MDQPFTVNSLKKLAAMPDHTDVSLSPEERVRALSKLGCNITISEDITPRRYFRSGVEMERMASVYLEEGNLENAFVLYNKFITLFVEKLPNHRDYQQCAVPEKQDIMKKLKEIAFPRTDELKNDLLKKYNVEYQEYLQSKNKYKAEILKKLEHQRLIEAERKRIAQMRQQQLESEQFLFFEDQLKKQELARGQMRSQQTSGLSEQIDGSALSCFSTHQNNSLLNVFADQPNKSDATNYASHSPPVNRALTPAATLSAVQNLVVEGLRCVVLPEDLCHKFLQLAESNTVRGIETCGILCGKLTHNEFTITHVIVPKQSAGPDYCDMENVEELFNVQDQHDLLTLGWIHTHPTQTAFLSSVDLHTHCSYQLMLPEAIAIVCSPKHKDTGIFRLTNAGMLEVSACKKKGFHPHTKEPRLFSICKHVLVKDIKIIVLDLR</sequence>
<keyword id="KW-0002">3D-structure</keyword>
<keyword id="KW-0007">Acetylation</keyword>
<keyword id="KW-0025">Alternative splicing</keyword>
<keyword id="KW-0378">Hydrolase</keyword>
<keyword id="KW-0479">Metal-binding</keyword>
<keyword id="KW-0482">Metalloprotease</keyword>
<keyword id="KW-0597">Phosphoprotein</keyword>
<keyword id="KW-0645">Protease</keyword>
<keyword id="KW-1267">Proteomics identification</keyword>
<keyword id="KW-1185">Reference proteome</keyword>
<keyword id="KW-0833">Ubl conjugation pathway</keyword>
<keyword id="KW-0862">Zinc</keyword>